<dbReference type="EMBL" id="CP000009">
    <property type="protein sequence ID" value="AAW60157.1"/>
    <property type="molecule type" value="Genomic_DNA"/>
</dbReference>
<dbReference type="RefSeq" id="WP_011251960.1">
    <property type="nucleotide sequence ID" value="NZ_LT900338.1"/>
</dbReference>
<dbReference type="SMR" id="Q5FTY9"/>
<dbReference type="STRING" id="290633.GOX0374"/>
<dbReference type="GeneID" id="76195076"/>
<dbReference type="KEGG" id="gox:GOX0374"/>
<dbReference type="eggNOG" id="COG0092">
    <property type="taxonomic scope" value="Bacteria"/>
</dbReference>
<dbReference type="HOGENOM" id="CLU_058591_0_2_5"/>
<dbReference type="Proteomes" id="UP000006375">
    <property type="component" value="Chromosome"/>
</dbReference>
<dbReference type="GO" id="GO:0022627">
    <property type="term" value="C:cytosolic small ribosomal subunit"/>
    <property type="evidence" value="ECO:0007669"/>
    <property type="project" value="TreeGrafter"/>
</dbReference>
<dbReference type="GO" id="GO:0003729">
    <property type="term" value="F:mRNA binding"/>
    <property type="evidence" value="ECO:0007669"/>
    <property type="project" value="UniProtKB-UniRule"/>
</dbReference>
<dbReference type="GO" id="GO:0019843">
    <property type="term" value="F:rRNA binding"/>
    <property type="evidence" value="ECO:0007669"/>
    <property type="project" value="UniProtKB-UniRule"/>
</dbReference>
<dbReference type="GO" id="GO:0003735">
    <property type="term" value="F:structural constituent of ribosome"/>
    <property type="evidence" value="ECO:0007669"/>
    <property type="project" value="InterPro"/>
</dbReference>
<dbReference type="GO" id="GO:0006412">
    <property type="term" value="P:translation"/>
    <property type="evidence" value="ECO:0007669"/>
    <property type="project" value="UniProtKB-UniRule"/>
</dbReference>
<dbReference type="CDD" id="cd02412">
    <property type="entry name" value="KH-II_30S_S3"/>
    <property type="match status" value="1"/>
</dbReference>
<dbReference type="FunFam" id="3.30.1140.32:FF:000002">
    <property type="entry name" value="30S ribosomal protein S3"/>
    <property type="match status" value="1"/>
</dbReference>
<dbReference type="FunFam" id="3.30.300.20:FF:000001">
    <property type="entry name" value="30S ribosomal protein S3"/>
    <property type="match status" value="1"/>
</dbReference>
<dbReference type="Gene3D" id="3.30.300.20">
    <property type="match status" value="1"/>
</dbReference>
<dbReference type="Gene3D" id="3.30.1140.32">
    <property type="entry name" value="Ribosomal protein S3, C-terminal domain"/>
    <property type="match status" value="1"/>
</dbReference>
<dbReference type="HAMAP" id="MF_01309_B">
    <property type="entry name" value="Ribosomal_uS3_B"/>
    <property type="match status" value="1"/>
</dbReference>
<dbReference type="InterPro" id="IPR004087">
    <property type="entry name" value="KH_dom"/>
</dbReference>
<dbReference type="InterPro" id="IPR015946">
    <property type="entry name" value="KH_dom-like_a/b"/>
</dbReference>
<dbReference type="InterPro" id="IPR004044">
    <property type="entry name" value="KH_dom_type_2"/>
</dbReference>
<dbReference type="InterPro" id="IPR009019">
    <property type="entry name" value="KH_sf_prok-type"/>
</dbReference>
<dbReference type="InterPro" id="IPR036419">
    <property type="entry name" value="Ribosomal_S3_C_sf"/>
</dbReference>
<dbReference type="InterPro" id="IPR005704">
    <property type="entry name" value="Ribosomal_uS3_bac-typ"/>
</dbReference>
<dbReference type="InterPro" id="IPR001351">
    <property type="entry name" value="Ribosomal_uS3_C"/>
</dbReference>
<dbReference type="InterPro" id="IPR018280">
    <property type="entry name" value="Ribosomal_uS3_CS"/>
</dbReference>
<dbReference type="NCBIfam" id="TIGR01009">
    <property type="entry name" value="rpsC_bact"/>
    <property type="match status" value="1"/>
</dbReference>
<dbReference type="PANTHER" id="PTHR11760">
    <property type="entry name" value="30S/40S RIBOSOMAL PROTEIN S3"/>
    <property type="match status" value="1"/>
</dbReference>
<dbReference type="PANTHER" id="PTHR11760:SF19">
    <property type="entry name" value="SMALL RIBOSOMAL SUBUNIT PROTEIN US3C"/>
    <property type="match status" value="1"/>
</dbReference>
<dbReference type="Pfam" id="PF07650">
    <property type="entry name" value="KH_2"/>
    <property type="match status" value="1"/>
</dbReference>
<dbReference type="Pfam" id="PF00189">
    <property type="entry name" value="Ribosomal_S3_C"/>
    <property type="match status" value="1"/>
</dbReference>
<dbReference type="SMART" id="SM00322">
    <property type="entry name" value="KH"/>
    <property type="match status" value="1"/>
</dbReference>
<dbReference type="SUPFAM" id="SSF54814">
    <property type="entry name" value="Prokaryotic type KH domain (KH-domain type II)"/>
    <property type="match status" value="1"/>
</dbReference>
<dbReference type="SUPFAM" id="SSF54821">
    <property type="entry name" value="Ribosomal protein S3 C-terminal domain"/>
    <property type="match status" value="1"/>
</dbReference>
<dbReference type="PROSITE" id="PS50823">
    <property type="entry name" value="KH_TYPE_2"/>
    <property type="match status" value="1"/>
</dbReference>
<dbReference type="PROSITE" id="PS00548">
    <property type="entry name" value="RIBOSOMAL_S3"/>
    <property type="match status" value="1"/>
</dbReference>
<sequence length="225" mass="25128">MGHKVNPIGLRLGVNRTWDSRWYAGQDYARLLHEDLKLRAFLRRKLSGAGVSRVVIERPAKKPRVTIYAARPGVVIGKKGQDIDALRKELSRMAKTDVALNIVEIRKPEIDATLVAENIAQQLERRVAFRRAMKRAIQSAMRLGAQGIRITCGGRLGGAEIARAEKYREGRVPLHTLRADIDYGTATAKTTYGTCGVKVWIFKGEILAHDPLAQDRRAAEQAPQR</sequence>
<feature type="chain" id="PRO_0000130126" description="Small ribosomal subunit protein uS3">
    <location>
        <begin position="1"/>
        <end position="225"/>
    </location>
</feature>
<feature type="domain" description="KH type-2" evidence="1">
    <location>
        <begin position="38"/>
        <end position="106"/>
    </location>
</feature>
<accession>Q5FTY9</accession>
<reference key="1">
    <citation type="journal article" date="2005" name="Nat. Biotechnol.">
        <title>Complete genome sequence of the acetic acid bacterium Gluconobacter oxydans.</title>
        <authorList>
            <person name="Prust C."/>
            <person name="Hoffmeister M."/>
            <person name="Liesegang H."/>
            <person name="Wiezer A."/>
            <person name="Fricke W.F."/>
            <person name="Ehrenreich A."/>
            <person name="Gottschalk G."/>
            <person name="Deppenmeier U."/>
        </authorList>
    </citation>
    <scope>NUCLEOTIDE SEQUENCE [LARGE SCALE GENOMIC DNA]</scope>
    <source>
        <strain>621H</strain>
    </source>
</reference>
<evidence type="ECO:0000255" key="1">
    <source>
        <dbReference type="HAMAP-Rule" id="MF_01309"/>
    </source>
</evidence>
<evidence type="ECO:0000305" key="2"/>
<name>RS3_GLUOX</name>
<keyword id="KW-1185">Reference proteome</keyword>
<keyword id="KW-0687">Ribonucleoprotein</keyword>
<keyword id="KW-0689">Ribosomal protein</keyword>
<keyword id="KW-0694">RNA-binding</keyword>
<keyword id="KW-0699">rRNA-binding</keyword>
<comment type="function">
    <text evidence="1">Binds the lower part of the 30S subunit head. Binds mRNA in the 70S ribosome, positioning it for translation.</text>
</comment>
<comment type="subunit">
    <text evidence="1">Part of the 30S ribosomal subunit. Forms a tight complex with proteins S10 and S14.</text>
</comment>
<comment type="similarity">
    <text evidence="1">Belongs to the universal ribosomal protein uS3 family.</text>
</comment>
<proteinExistence type="inferred from homology"/>
<gene>
    <name evidence="1" type="primary">rpsC</name>
    <name type="ordered locus">GOX0374</name>
</gene>
<protein>
    <recommendedName>
        <fullName evidence="1">Small ribosomal subunit protein uS3</fullName>
    </recommendedName>
    <alternativeName>
        <fullName evidence="2">30S ribosomal protein S3</fullName>
    </alternativeName>
</protein>
<organism>
    <name type="scientific">Gluconobacter oxydans (strain 621H)</name>
    <name type="common">Gluconobacter suboxydans</name>
    <dbReference type="NCBI Taxonomy" id="290633"/>
    <lineage>
        <taxon>Bacteria</taxon>
        <taxon>Pseudomonadati</taxon>
        <taxon>Pseudomonadota</taxon>
        <taxon>Alphaproteobacteria</taxon>
        <taxon>Acetobacterales</taxon>
        <taxon>Acetobacteraceae</taxon>
        <taxon>Gluconobacter</taxon>
    </lineage>
</organism>